<name>ST6B1_MOUSE</name>
<dbReference type="EC" id="2.8.2.n2" evidence="2"/>
<dbReference type="EMBL" id="AC154274">
    <property type="status" value="NOT_ANNOTATED_CDS"/>
    <property type="molecule type" value="Genomic_DNA"/>
</dbReference>
<dbReference type="EMBL" id="AK010729">
    <property type="status" value="NOT_ANNOTATED_CDS"/>
    <property type="molecule type" value="mRNA"/>
</dbReference>
<dbReference type="CCDS" id="CCDS50182.1"/>
<dbReference type="RefSeq" id="NP_001157097.1">
    <property type="nucleotide sequence ID" value="NM_001163625.2"/>
</dbReference>
<dbReference type="SMR" id="P0CC03"/>
<dbReference type="FunCoup" id="P0CC03">
    <property type="interactions" value="269"/>
</dbReference>
<dbReference type="STRING" id="10090.ENSMUSP00000132823"/>
<dbReference type="PhosphoSitePlus" id="P0CC03"/>
<dbReference type="PaxDb" id="10090-ENSMUSP00000132823"/>
<dbReference type="ProteomicsDB" id="257084"/>
<dbReference type="Antibodypedia" id="29393">
    <property type="antibodies" value="24 antibodies from 13 providers"/>
</dbReference>
<dbReference type="Ensembl" id="ENSMUST00000169544.8">
    <property type="protein sequence ID" value="ENSMUSP00000132823.2"/>
    <property type="gene ID" value="ENSMUSG00000038045.15"/>
</dbReference>
<dbReference type="GeneID" id="73671"/>
<dbReference type="KEGG" id="mmu:73671"/>
<dbReference type="UCSC" id="uc012axk.1">
    <property type="organism name" value="mouse"/>
</dbReference>
<dbReference type="AGR" id="MGI:1920921"/>
<dbReference type="CTD" id="391365"/>
<dbReference type="MGI" id="MGI:1920921">
    <property type="gene designation" value="Sult6b1"/>
</dbReference>
<dbReference type="VEuPathDB" id="HostDB:ENSMUSG00000038045"/>
<dbReference type="eggNOG" id="KOG1584">
    <property type="taxonomic scope" value="Eukaryota"/>
</dbReference>
<dbReference type="GeneTree" id="ENSGT00940000159084"/>
<dbReference type="InParanoid" id="P0CC03"/>
<dbReference type="OMA" id="EFPILEC"/>
<dbReference type="OrthoDB" id="205623at2759"/>
<dbReference type="PhylomeDB" id="P0CC03"/>
<dbReference type="TreeFam" id="TF321745"/>
<dbReference type="Reactome" id="R-MMU-156584">
    <property type="pathway name" value="Cytosolic sulfonation of small molecules"/>
</dbReference>
<dbReference type="BioGRID-ORCS" id="73671">
    <property type="hits" value="1 hit in 77 CRISPR screens"/>
</dbReference>
<dbReference type="PRO" id="PR:P0CC03"/>
<dbReference type="Proteomes" id="UP000000589">
    <property type="component" value="Chromosome 17"/>
</dbReference>
<dbReference type="RNAct" id="P0CC03">
    <property type="molecule type" value="protein"/>
</dbReference>
<dbReference type="Bgee" id="ENSMUSG00000038045">
    <property type="expression patterns" value="Expressed in olfactory epithelium and 167 other cell types or tissues"/>
</dbReference>
<dbReference type="ExpressionAtlas" id="P0CC03">
    <property type="expression patterns" value="baseline and differential"/>
</dbReference>
<dbReference type="GO" id="GO:0005829">
    <property type="term" value="C:cytosol"/>
    <property type="evidence" value="ECO:0007669"/>
    <property type="project" value="UniProtKB-SubCell"/>
</dbReference>
<dbReference type="GO" id="GO:0008146">
    <property type="term" value="F:sulfotransferase activity"/>
    <property type="evidence" value="ECO:0007669"/>
    <property type="project" value="InterPro"/>
</dbReference>
<dbReference type="FunFam" id="3.40.50.300:FF:002302">
    <property type="entry name" value="Sulfotransferase"/>
    <property type="match status" value="1"/>
</dbReference>
<dbReference type="Gene3D" id="3.40.50.300">
    <property type="entry name" value="P-loop containing nucleotide triphosphate hydrolases"/>
    <property type="match status" value="1"/>
</dbReference>
<dbReference type="InterPro" id="IPR027417">
    <property type="entry name" value="P-loop_NTPase"/>
</dbReference>
<dbReference type="InterPro" id="IPR000863">
    <property type="entry name" value="Sulfotransferase_dom"/>
</dbReference>
<dbReference type="PANTHER" id="PTHR11783">
    <property type="entry name" value="SULFOTRANSFERASE SULT"/>
    <property type="match status" value="1"/>
</dbReference>
<dbReference type="Pfam" id="PF00685">
    <property type="entry name" value="Sulfotransfer_1"/>
    <property type="match status" value="1"/>
</dbReference>
<dbReference type="SUPFAM" id="SSF52540">
    <property type="entry name" value="P-loop containing nucleoside triphosphate hydrolases"/>
    <property type="match status" value="1"/>
</dbReference>
<gene>
    <name type="primary">Sult6b1</name>
</gene>
<protein>
    <recommendedName>
        <fullName>Sulfotransferase 6B1</fullName>
        <shortName>ST6B1</shortName>
    </recommendedName>
    <alternativeName>
        <fullName>Thyroxine sulfotransferase</fullName>
        <ecNumber evidence="2">2.8.2.n2</ecNumber>
    </alternativeName>
</protein>
<sequence length="303" mass="35077">MADKSKFIDYIDDALEKSKETTLSQLFLTYQGIPYPVTMCTQETFRALDAFEARSDDVLLASYPKCGSNWILHIVSELIFAVSKKKYACPEFPVLECGDAEKYQRMKLFPSPRILTTHLHYDKLPQSIFKNKAKILVIFRNPKDTAVSFFHFHNDVPDIPSYASWDEFFRQFIKGQVSWGSYFDFAINWNKHIDDENVKFILYEDLKENLVVGIKQISEFLGFSLTDEQIETISTQSTFLAMRANSQETHGAIGPFLFRKGEVGDWKRLFNETQNQEMDERFKECLAGTSLGDKLKYEAYCLA</sequence>
<evidence type="ECO:0000250" key="1">
    <source>
        <dbReference type="UniProtKB" id="P49891"/>
    </source>
</evidence>
<evidence type="ECO:0000269" key="2">
    <source>
    </source>
</evidence>
<evidence type="ECO:0000305" key="3"/>
<feature type="chain" id="PRO_0000389506" description="Sulfotransferase 6B1">
    <location>
        <begin position="1"/>
        <end position="303"/>
    </location>
</feature>
<feature type="active site" description="Proton acceptor" evidence="1">
    <location>
        <position position="118"/>
    </location>
</feature>
<feature type="binding site" evidence="1">
    <location>
        <begin position="65"/>
        <end position="70"/>
    </location>
    <ligand>
        <name>3'-phosphoadenylyl sulfate</name>
        <dbReference type="ChEBI" id="CHEBI:58339"/>
    </ligand>
</feature>
<feature type="binding site" evidence="1">
    <location>
        <position position="140"/>
    </location>
    <ligand>
        <name>3'-phosphoadenylyl sulfate</name>
        <dbReference type="ChEBI" id="CHEBI:58339"/>
    </ligand>
</feature>
<feature type="binding site" evidence="1">
    <location>
        <position position="148"/>
    </location>
    <ligand>
        <name>3'-phosphoadenylyl sulfate</name>
        <dbReference type="ChEBI" id="CHEBI:58339"/>
    </ligand>
</feature>
<feature type="binding site" evidence="1">
    <location>
        <position position="203"/>
    </location>
    <ligand>
        <name>3'-phosphoadenylyl sulfate</name>
        <dbReference type="ChEBI" id="CHEBI:58339"/>
    </ligand>
</feature>
<feature type="binding site" evidence="1">
    <location>
        <begin position="237"/>
        <end position="242"/>
    </location>
    <ligand>
        <name>3'-phosphoadenylyl sulfate</name>
        <dbReference type="ChEBI" id="CHEBI:58339"/>
    </ligand>
</feature>
<feature type="binding site" evidence="1">
    <location>
        <begin position="259"/>
        <end position="261"/>
    </location>
    <ligand>
        <name>3'-phosphoadenylyl sulfate</name>
        <dbReference type="ChEBI" id="CHEBI:58339"/>
    </ligand>
</feature>
<feature type="sequence conflict" description="In Ref. 3; AK010729." evidence="3" ref="3">
    <original>K</original>
    <variation>E</variation>
    <location>
        <position position="134"/>
    </location>
</feature>
<accession>P0CC03</accession>
<keyword id="KW-0963">Cytoplasm</keyword>
<keyword id="KW-1185">Reference proteome</keyword>
<keyword id="KW-0808">Transferase</keyword>
<reference key="1">
    <citation type="journal article" date="2009" name="J. Biochem.">
        <title>Molecular cloning, expression and characterization of a novel mouse SULT6 cytosolic sulfotransferase.</title>
        <authorList>
            <person name="Takahashi S."/>
            <person name="Sakakibara Y."/>
            <person name="Mishiro E."/>
            <person name="Kouriki H."/>
            <person name="Nobe R."/>
            <person name="Kurogi K."/>
            <person name="Yasuda S."/>
            <person name="Liu M.C."/>
            <person name="Suiko M."/>
        </authorList>
    </citation>
    <scope>NUCLEOTIDE SEQUENCE [MRNA]</scope>
    <scope>FUNCTION</scope>
    <scope>CATALYTIC ACTIVITY</scope>
    <scope>BIOPHYSICOCHEMICAL PROPERTIES</scope>
    <scope>SUBCELLULAR LOCATION</scope>
    <scope>TISSUE SPECIFICITY</scope>
    <source>
        <tissue>Heart</tissue>
    </source>
</reference>
<reference key="2">
    <citation type="journal article" date="2009" name="PLoS Biol.">
        <title>Lineage-specific biology revealed by a finished genome assembly of the mouse.</title>
        <authorList>
            <person name="Church D.M."/>
            <person name="Goodstadt L."/>
            <person name="Hillier L.W."/>
            <person name="Zody M.C."/>
            <person name="Goldstein S."/>
            <person name="She X."/>
            <person name="Bult C.J."/>
            <person name="Agarwala R."/>
            <person name="Cherry J.L."/>
            <person name="DiCuccio M."/>
            <person name="Hlavina W."/>
            <person name="Kapustin Y."/>
            <person name="Meric P."/>
            <person name="Maglott D."/>
            <person name="Birtle Z."/>
            <person name="Marques A.C."/>
            <person name="Graves T."/>
            <person name="Zhou S."/>
            <person name="Teague B."/>
            <person name="Potamousis K."/>
            <person name="Churas C."/>
            <person name="Place M."/>
            <person name="Herschleb J."/>
            <person name="Runnheim R."/>
            <person name="Forrest D."/>
            <person name="Amos-Landgraf J."/>
            <person name="Schwartz D.C."/>
            <person name="Cheng Z."/>
            <person name="Lindblad-Toh K."/>
            <person name="Eichler E.E."/>
            <person name="Ponting C.P."/>
        </authorList>
    </citation>
    <scope>NUCLEOTIDE SEQUENCE [LARGE SCALE GENOMIC DNA]</scope>
    <source>
        <strain>C57BL/6J</strain>
    </source>
</reference>
<reference key="3">
    <citation type="journal article" date="2005" name="Science">
        <title>The transcriptional landscape of the mammalian genome.</title>
        <authorList>
            <person name="Carninci P."/>
            <person name="Kasukawa T."/>
            <person name="Katayama S."/>
            <person name="Gough J."/>
            <person name="Frith M.C."/>
            <person name="Maeda N."/>
            <person name="Oyama R."/>
            <person name="Ravasi T."/>
            <person name="Lenhard B."/>
            <person name="Wells C."/>
            <person name="Kodzius R."/>
            <person name="Shimokawa K."/>
            <person name="Bajic V.B."/>
            <person name="Brenner S.E."/>
            <person name="Batalov S."/>
            <person name="Forrest A.R."/>
            <person name="Zavolan M."/>
            <person name="Davis M.J."/>
            <person name="Wilming L.G."/>
            <person name="Aidinis V."/>
            <person name="Allen J.E."/>
            <person name="Ambesi-Impiombato A."/>
            <person name="Apweiler R."/>
            <person name="Aturaliya R.N."/>
            <person name="Bailey T.L."/>
            <person name="Bansal M."/>
            <person name="Baxter L."/>
            <person name="Beisel K.W."/>
            <person name="Bersano T."/>
            <person name="Bono H."/>
            <person name="Chalk A.M."/>
            <person name="Chiu K.P."/>
            <person name="Choudhary V."/>
            <person name="Christoffels A."/>
            <person name="Clutterbuck D.R."/>
            <person name="Crowe M.L."/>
            <person name="Dalla E."/>
            <person name="Dalrymple B.P."/>
            <person name="de Bono B."/>
            <person name="Della Gatta G."/>
            <person name="di Bernardo D."/>
            <person name="Down T."/>
            <person name="Engstrom P."/>
            <person name="Fagiolini M."/>
            <person name="Faulkner G."/>
            <person name="Fletcher C.F."/>
            <person name="Fukushima T."/>
            <person name="Furuno M."/>
            <person name="Futaki S."/>
            <person name="Gariboldi M."/>
            <person name="Georgii-Hemming P."/>
            <person name="Gingeras T.R."/>
            <person name="Gojobori T."/>
            <person name="Green R.E."/>
            <person name="Gustincich S."/>
            <person name="Harbers M."/>
            <person name="Hayashi Y."/>
            <person name="Hensch T.K."/>
            <person name="Hirokawa N."/>
            <person name="Hill D."/>
            <person name="Huminiecki L."/>
            <person name="Iacono M."/>
            <person name="Ikeo K."/>
            <person name="Iwama A."/>
            <person name="Ishikawa T."/>
            <person name="Jakt M."/>
            <person name="Kanapin A."/>
            <person name="Katoh M."/>
            <person name="Kawasawa Y."/>
            <person name="Kelso J."/>
            <person name="Kitamura H."/>
            <person name="Kitano H."/>
            <person name="Kollias G."/>
            <person name="Krishnan S.P."/>
            <person name="Kruger A."/>
            <person name="Kummerfeld S.K."/>
            <person name="Kurochkin I.V."/>
            <person name="Lareau L.F."/>
            <person name="Lazarevic D."/>
            <person name="Lipovich L."/>
            <person name="Liu J."/>
            <person name="Liuni S."/>
            <person name="McWilliam S."/>
            <person name="Madan Babu M."/>
            <person name="Madera M."/>
            <person name="Marchionni L."/>
            <person name="Matsuda H."/>
            <person name="Matsuzawa S."/>
            <person name="Miki H."/>
            <person name="Mignone F."/>
            <person name="Miyake S."/>
            <person name="Morris K."/>
            <person name="Mottagui-Tabar S."/>
            <person name="Mulder N."/>
            <person name="Nakano N."/>
            <person name="Nakauchi H."/>
            <person name="Ng P."/>
            <person name="Nilsson R."/>
            <person name="Nishiguchi S."/>
            <person name="Nishikawa S."/>
            <person name="Nori F."/>
            <person name="Ohara O."/>
            <person name="Okazaki Y."/>
            <person name="Orlando V."/>
            <person name="Pang K.C."/>
            <person name="Pavan W.J."/>
            <person name="Pavesi G."/>
            <person name="Pesole G."/>
            <person name="Petrovsky N."/>
            <person name="Piazza S."/>
            <person name="Reed J."/>
            <person name="Reid J.F."/>
            <person name="Ring B.Z."/>
            <person name="Ringwald M."/>
            <person name="Rost B."/>
            <person name="Ruan Y."/>
            <person name="Salzberg S.L."/>
            <person name="Sandelin A."/>
            <person name="Schneider C."/>
            <person name="Schoenbach C."/>
            <person name="Sekiguchi K."/>
            <person name="Semple C.A."/>
            <person name="Seno S."/>
            <person name="Sessa L."/>
            <person name="Sheng Y."/>
            <person name="Shibata Y."/>
            <person name="Shimada H."/>
            <person name="Shimada K."/>
            <person name="Silva D."/>
            <person name="Sinclair B."/>
            <person name="Sperling S."/>
            <person name="Stupka E."/>
            <person name="Sugiura K."/>
            <person name="Sultana R."/>
            <person name="Takenaka Y."/>
            <person name="Taki K."/>
            <person name="Tammoja K."/>
            <person name="Tan S.L."/>
            <person name="Tang S."/>
            <person name="Taylor M.S."/>
            <person name="Tegner J."/>
            <person name="Teichmann S.A."/>
            <person name="Ueda H.R."/>
            <person name="van Nimwegen E."/>
            <person name="Verardo R."/>
            <person name="Wei C.L."/>
            <person name="Yagi K."/>
            <person name="Yamanishi H."/>
            <person name="Zabarovsky E."/>
            <person name="Zhu S."/>
            <person name="Zimmer A."/>
            <person name="Hide W."/>
            <person name="Bult C."/>
            <person name="Grimmond S.M."/>
            <person name="Teasdale R.D."/>
            <person name="Liu E.T."/>
            <person name="Brusic V."/>
            <person name="Quackenbush J."/>
            <person name="Wahlestedt C."/>
            <person name="Mattick J.S."/>
            <person name="Hume D.A."/>
            <person name="Kai C."/>
            <person name="Sasaki D."/>
            <person name="Tomaru Y."/>
            <person name="Fukuda S."/>
            <person name="Kanamori-Katayama M."/>
            <person name="Suzuki M."/>
            <person name="Aoki J."/>
            <person name="Arakawa T."/>
            <person name="Iida J."/>
            <person name="Imamura K."/>
            <person name="Itoh M."/>
            <person name="Kato T."/>
            <person name="Kawaji H."/>
            <person name="Kawagashira N."/>
            <person name="Kawashima T."/>
            <person name="Kojima M."/>
            <person name="Kondo S."/>
            <person name="Konno H."/>
            <person name="Nakano K."/>
            <person name="Ninomiya N."/>
            <person name="Nishio T."/>
            <person name="Okada M."/>
            <person name="Plessy C."/>
            <person name="Shibata K."/>
            <person name="Shiraki T."/>
            <person name="Suzuki S."/>
            <person name="Tagami M."/>
            <person name="Waki K."/>
            <person name="Watahiki A."/>
            <person name="Okamura-Oho Y."/>
            <person name="Suzuki H."/>
            <person name="Kawai J."/>
            <person name="Hayashizaki Y."/>
        </authorList>
    </citation>
    <scope>NUCLEOTIDE SEQUENCE [LARGE SCALE MRNA] OF 134-303</scope>
</reference>
<comment type="function">
    <text evidence="2">Sulfotransferase that utilizes 3'-phospho-5'-adenylyl sulfate (PAPS) as sulfonate donor to catalyze the sulfate conjugation of thyroxine. Involved in the metabolism of thyroxine.</text>
</comment>
<comment type="catalytic activity">
    <reaction evidence="2">
        <text>thyroxine + 3'-phosphoadenylyl sulfate = thyroxine sulfate + adenosine 3',5'-bisphosphate + H(+)</text>
        <dbReference type="Rhea" id="RHEA:26422"/>
        <dbReference type="ChEBI" id="CHEBI:15378"/>
        <dbReference type="ChEBI" id="CHEBI:58339"/>
        <dbReference type="ChEBI" id="CHEBI:58343"/>
        <dbReference type="ChEBI" id="CHEBI:58910"/>
        <dbReference type="ChEBI" id="CHEBI:305790"/>
        <dbReference type="EC" id="2.8.2.n2"/>
    </reaction>
</comment>
<comment type="biophysicochemical properties">
    <kinetics>
        <KM evidence="2">143.7 uM for thyroxine</KM>
        <Vmax evidence="2">40.4 pmol/min/mg enzyme</Vmax>
    </kinetics>
    <phDependence>
        <text evidence="2">Optimum pH is 8.</text>
    </phDependence>
</comment>
<comment type="subcellular location">
    <subcellularLocation>
        <location evidence="2">Cytoplasm</location>
        <location evidence="2">Cytosol</location>
    </subcellularLocation>
</comment>
<comment type="tissue specificity">
    <text evidence="2">Expressed in brain, heart, kidney, thymus, lung, liver and testis.</text>
</comment>
<comment type="similarity">
    <text evidence="3">Belongs to the sulfotransferase 1 family.</text>
</comment>
<organism>
    <name type="scientific">Mus musculus</name>
    <name type="common">Mouse</name>
    <dbReference type="NCBI Taxonomy" id="10090"/>
    <lineage>
        <taxon>Eukaryota</taxon>
        <taxon>Metazoa</taxon>
        <taxon>Chordata</taxon>
        <taxon>Craniata</taxon>
        <taxon>Vertebrata</taxon>
        <taxon>Euteleostomi</taxon>
        <taxon>Mammalia</taxon>
        <taxon>Eutheria</taxon>
        <taxon>Euarchontoglires</taxon>
        <taxon>Glires</taxon>
        <taxon>Rodentia</taxon>
        <taxon>Myomorpha</taxon>
        <taxon>Muroidea</taxon>
        <taxon>Muridae</taxon>
        <taxon>Murinae</taxon>
        <taxon>Mus</taxon>
        <taxon>Mus</taxon>
    </lineage>
</organism>
<proteinExistence type="evidence at protein level"/>